<accession>C0PW90</accession>
<protein>
    <recommendedName>
        <fullName evidence="1">Pyrimidine-specific ribonucleoside hydrolase RihA</fullName>
        <ecNumber evidence="1">3.2.-.-</ecNumber>
    </recommendedName>
    <alternativeName>
        <fullName evidence="1">Cytidine/uridine-specific hydrolase</fullName>
    </alternativeName>
</protein>
<name>RIHA_SALPC</name>
<dbReference type="EC" id="3.2.-.-" evidence="1"/>
<dbReference type="EMBL" id="CP000857">
    <property type="protein sequence ID" value="ACN44853.1"/>
    <property type="molecule type" value="Genomic_DNA"/>
</dbReference>
<dbReference type="RefSeq" id="WP_001207425.1">
    <property type="nucleotide sequence ID" value="NC_012125.1"/>
</dbReference>
<dbReference type="SMR" id="C0PW90"/>
<dbReference type="KEGG" id="sei:SPC_0678"/>
<dbReference type="HOGENOM" id="CLU_036838_2_0_6"/>
<dbReference type="Proteomes" id="UP000001599">
    <property type="component" value="Chromosome"/>
</dbReference>
<dbReference type="GO" id="GO:0005829">
    <property type="term" value="C:cytosol"/>
    <property type="evidence" value="ECO:0007669"/>
    <property type="project" value="TreeGrafter"/>
</dbReference>
<dbReference type="GO" id="GO:0008477">
    <property type="term" value="F:purine nucleosidase activity"/>
    <property type="evidence" value="ECO:0007669"/>
    <property type="project" value="TreeGrafter"/>
</dbReference>
<dbReference type="GO" id="GO:0045437">
    <property type="term" value="F:uridine nucleosidase activity"/>
    <property type="evidence" value="ECO:0007669"/>
    <property type="project" value="InterPro"/>
</dbReference>
<dbReference type="GO" id="GO:0015949">
    <property type="term" value="P:nucleobase-containing small molecule interconversion"/>
    <property type="evidence" value="ECO:0007669"/>
    <property type="project" value="InterPro"/>
</dbReference>
<dbReference type="GO" id="GO:0006152">
    <property type="term" value="P:purine nucleoside catabolic process"/>
    <property type="evidence" value="ECO:0007669"/>
    <property type="project" value="TreeGrafter"/>
</dbReference>
<dbReference type="GO" id="GO:0006206">
    <property type="term" value="P:pyrimidine nucleobase metabolic process"/>
    <property type="evidence" value="ECO:0007669"/>
    <property type="project" value="UniProtKB-UniRule"/>
</dbReference>
<dbReference type="CDD" id="cd02651">
    <property type="entry name" value="nuc_hydro_IU_UC_XIUA"/>
    <property type="match status" value="1"/>
</dbReference>
<dbReference type="FunFam" id="3.90.245.10:FF:000001">
    <property type="entry name" value="Pyrimidine-specific ribonucleoside hydrolase RihA"/>
    <property type="match status" value="1"/>
</dbReference>
<dbReference type="Gene3D" id="3.90.245.10">
    <property type="entry name" value="Ribonucleoside hydrolase-like"/>
    <property type="match status" value="1"/>
</dbReference>
<dbReference type="HAMAP" id="MF_01431">
    <property type="entry name" value="Pyrim_hydro_RihA"/>
    <property type="match status" value="1"/>
</dbReference>
<dbReference type="InterPro" id="IPR015910">
    <property type="entry name" value="I/U_nuclsd_hydro_CS"/>
</dbReference>
<dbReference type="InterPro" id="IPR001910">
    <property type="entry name" value="Inosine/uridine_hydrolase_dom"/>
</dbReference>
<dbReference type="InterPro" id="IPR023186">
    <property type="entry name" value="IUNH"/>
</dbReference>
<dbReference type="InterPro" id="IPR022975">
    <property type="entry name" value="Pyrim_hydro_RihA"/>
</dbReference>
<dbReference type="InterPro" id="IPR036452">
    <property type="entry name" value="Ribo_hydro-like"/>
</dbReference>
<dbReference type="NCBIfam" id="NF007761">
    <property type="entry name" value="PRK10443.1"/>
    <property type="match status" value="1"/>
</dbReference>
<dbReference type="PANTHER" id="PTHR12304">
    <property type="entry name" value="INOSINE-URIDINE PREFERRING NUCLEOSIDE HYDROLASE"/>
    <property type="match status" value="1"/>
</dbReference>
<dbReference type="PANTHER" id="PTHR12304:SF4">
    <property type="entry name" value="URIDINE NUCLEOSIDASE"/>
    <property type="match status" value="1"/>
</dbReference>
<dbReference type="Pfam" id="PF01156">
    <property type="entry name" value="IU_nuc_hydro"/>
    <property type="match status" value="1"/>
</dbReference>
<dbReference type="SUPFAM" id="SSF53590">
    <property type="entry name" value="Nucleoside hydrolase"/>
    <property type="match status" value="1"/>
</dbReference>
<dbReference type="PROSITE" id="PS01247">
    <property type="entry name" value="IUNH"/>
    <property type="match status" value="1"/>
</dbReference>
<reference key="1">
    <citation type="journal article" date="2009" name="PLoS ONE">
        <title>Salmonella paratyphi C: genetic divergence from Salmonella choleraesuis and pathogenic convergence with Salmonella typhi.</title>
        <authorList>
            <person name="Liu W.-Q."/>
            <person name="Feng Y."/>
            <person name="Wang Y."/>
            <person name="Zou Q.-H."/>
            <person name="Chen F."/>
            <person name="Guo J.-T."/>
            <person name="Peng Y.-H."/>
            <person name="Jin Y."/>
            <person name="Li Y.-G."/>
            <person name="Hu S.-N."/>
            <person name="Johnston R.N."/>
            <person name="Liu G.-R."/>
            <person name="Liu S.-L."/>
        </authorList>
    </citation>
    <scope>NUCLEOTIDE SEQUENCE [LARGE SCALE GENOMIC DNA]</scope>
    <source>
        <strain>RKS4594</strain>
    </source>
</reference>
<gene>
    <name evidence="1" type="primary">rihA</name>
    <name type="ordered locus">SPC_0678</name>
</gene>
<keyword id="KW-0326">Glycosidase</keyword>
<keyword id="KW-0378">Hydrolase</keyword>
<feature type="chain" id="PRO_1000184895" description="Pyrimidine-specific ribonucleoside hydrolase RihA">
    <location>
        <begin position="1"/>
        <end position="311"/>
    </location>
</feature>
<feature type="active site" evidence="1">
    <location>
        <position position="240"/>
    </location>
</feature>
<sequence>MALPIIIDCDPGHDDAIALVLALASPELEVKAITSSAGNQTPEKTLRNVLRMLTLLKRPDIPVAGGAVKPLMRELIIADNVHGESGLDGPALPEPSFAPQSGTAVELMAKTLRESAQPVTIVSTGPQTNVALLLNSHPELHTKIARIVIMGGAMGLGNWTPAAEFNIYVDPEAAEIVFQSGIPVVMAGLDVTHKAQIHAADIERFRDIGNPISTIVAELLDFFFEYHKDEKWGFVGAPLHDPCTIAWLLKPEIFTTVERWVGVETKGKYTQGMTVVDYYFLTGNKPNATVMVDVDRQGFVDLLAERLQYYA</sequence>
<organism>
    <name type="scientific">Salmonella paratyphi C (strain RKS4594)</name>
    <dbReference type="NCBI Taxonomy" id="476213"/>
    <lineage>
        <taxon>Bacteria</taxon>
        <taxon>Pseudomonadati</taxon>
        <taxon>Pseudomonadota</taxon>
        <taxon>Gammaproteobacteria</taxon>
        <taxon>Enterobacterales</taxon>
        <taxon>Enterobacteriaceae</taxon>
        <taxon>Salmonella</taxon>
    </lineage>
</organism>
<evidence type="ECO:0000255" key="1">
    <source>
        <dbReference type="HAMAP-Rule" id="MF_01431"/>
    </source>
</evidence>
<comment type="function">
    <text evidence="1">Hydrolyzes cytidine or uridine to ribose and cytosine or uracil, respectively.</text>
</comment>
<comment type="similarity">
    <text evidence="1">Belongs to the IUNH family. RihA subfamily.</text>
</comment>
<proteinExistence type="inferred from homology"/>